<evidence type="ECO:0000250" key="1"/>
<evidence type="ECO:0000305" key="2"/>
<protein>
    <recommendedName>
        <fullName>GMP synthase [glutamine-hydrolyzing] subunit B</fullName>
        <ecNumber>6.3.5.2</ecNumber>
    </recommendedName>
    <alternativeName>
        <fullName>GMP synthetase</fullName>
    </alternativeName>
</protein>
<sequence>MSFDPQKFVDEISPQLKEIVDGRAIAAVSGGVDSTTAAVLSYKILGDKVIPVMIDTGFLRENEAENVKNMLKDLMPLQVIDEREKFISSLEGMSDAEEKRKKFRQLFYDTLSRIVKEFNAKYLIQGTIAADWVETQGGIKTQHNVLVQLGIDTEKEWGFKVVEPLADLYKDEVRALAKYLGLPRDIYNRQPFPGPGLLVRVVGKLTREKLEILRKVTTTVEKNLSELNLSQYFAVIFDSAAEYNKELSNEVGCDVKVYKTLATGVKGDVRAYGNIAGIECRKDYESLREIMEKLTSYNITHVVVKIKDKNPEGIYTIGIRAVNTQDFMTADFAKINWNILEKIANEINDKKIKEVVYDITTKPPATIEYE</sequence>
<gene>
    <name type="primary">guaAB</name>
    <name type="ordered locus">STK_23450</name>
</gene>
<name>GUAAB_SULTO</name>
<organism>
    <name type="scientific">Sulfurisphaera tokodaii (strain DSM 16993 / JCM 10545 / NBRC 100140 / 7)</name>
    <name type="common">Sulfolobus tokodaii</name>
    <dbReference type="NCBI Taxonomy" id="273063"/>
    <lineage>
        <taxon>Archaea</taxon>
        <taxon>Thermoproteota</taxon>
        <taxon>Thermoprotei</taxon>
        <taxon>Sulfolobales</taxon>
        <taxon>Sulfolobaceae</taxon>
        <taxon>Sulfurisphaera</taxon>
    </lineage>
</organism>
<feature type="chain" id="PRO_0000140252" description="GMP synthase [glutamine-hydrolyzing] subunit B">
    <location>
        <begin position="1"/>
        <end position="370"/>
    </location>
</feature>
<feature type="domain" description="GMPS ATP-PPase">
    <location>
        <begin position="3"/>
        <end position="189"/>
    </location>
</feature>
<feature type="binding site" evidence="1">
    <location>
        <begin position="29"/>
        <end position="35"/>
    </location>
    <ligand>
        <name>ATP</name>
        <dbReference type="ChEBI" id="CHEBI:30616"/>
    </ligand>
</feature>
<keyword id="KW-0067">ATP-binding</keyword>
<keyword id="KW-0332">GMP biosynthesis</keyword>
<keyword id="KW-0436">Ligase</keyword>
<keyword id="KW-0547">Nucleotide-binding</keyword>
<keyword id="KW-0658">Purine biosynthesis</keyword>
<keyword id="KW-1185">Reference proteome</keyword>
<proteinExistence type="inferred from homology"/>
<dbReference type="EC" id="6.3.5.2"/>
<dbReference type="EMBL" id="BA000023">
    <property type="protein sequence ID" value="BAK54789.1"/>
    <property type="molecule type" value="Genomic_DNA"/>
</dbReference>
<dbReference type="RefSeq" id="WP_010980429.1">
    <property type="nucleotide sequence ID" value="NC_003106.2"/>
</dbReference>
<dbReference type="SMR" id="Q96Y23"/>
<dbReference type="STRING" id="273063.STK_23450"/>
<dbReference type="GeneID" id="1460427"/>
<dbReference type="KEGG" id="sto:STK_23450"/>
<dbReference type="PATRIC" id="fig|273063.9.peg.2649"/>
<dbReference type="eggNOG" id="arCOG00085">
    <property type="taxonomic scope" value="Archaea"/>
</dbReference>
<dbReference type="OrthoDB" id="33844at2157"/>
<dbReference type="UniPathway" id="UPA00189">
    <property type="reaction ID" value="UER00296"/>
</dbReference>
<dbReference type="Proteomes" id="UP000001015">
    <property type="component" value="Chromosome"/>
</dbReference>
<dbReference type="GO" id="GO:0005829">
    <property type="term" value="C:cytosol"/>
    <property type="evidence" value="ECO:0007669"/>
    <property type="project" value="TreeGrafter"/>
</dbReference>
<dbReference type="GO" id="GO:0005524">
    <property type="term" value="F:ATP binding"/>
    <property type="evidence" value="ECO:0007669"/>
    <property type="project" value="UniProtKB-UniRule"/>
</dbReference>
<dbReference type="GO" id="GO:0003921">
    <property type="term" value="F:GMP synthase activity"/>
    <property type="evidence" value="ECO:0007669"/>
    <property type="project" value="InterPro"/>
</dbReference>
<dbReference type="CDD" id="cd01997">
    <property type="entry name" value="GMP_synthase_C"/>
    <property type="match status" value="1"/>
</dbReference>
<dbReference type="Gene3D" id="3.30.300.10">
    <property type="match status" value="2"/>
</dbReference>
<dbReference type="Gene3D" id="3.40.50.620">
    <property type="entry name" value="HUPs"/>
    <property type="match status" value="1"/>
</dbReference>
<dbReference type="HAMAP" id="MF_00345">
    <property type="entry name" value="GMP_synthase_B"/>
    <property type="match status" value="1"/>
</dbReference>
<dbReference type="InterPro" id="IPR001674">
    <property type="entry name" value="GMP_synth_C"/>
</dbReference>
<dbReference type="InterPro" id="IPR026598">
    <property type="entry name" value="GMP_synthase_B"/>
</dbReference>
<dbReference type="InterPro" id="IPR025777">
    <property type="entry name" value="GMPS_ATP_PPase_dom"/>
</dbReference>
<dbReference type="InterPro" id="IPR022310">
    <property type="entry name" value="NAD/GMP_synthase"/>
</dbReference>
<dbReference type="InterPro" id="IPR014729">
    <property type="entry name" value="Rossmann-like_a/b/a_fold"/>
</dbReference>
<dbReference type="PANTHER" id="PTHR11922:SF2">
    <property type="entry name" value="GMP SYNTHASE [GLUTAMINE-HYDROLYZING]"/>
    <property type="match status" value="1"/>
</dbReference>
<dbReference type="PANTHER" id="PTHR11922">
    <property type="entry name" value="GMP SYNTHASE-RELATED"/>
    <property type="match status" value="1"/>
</dbReference>
<dbReference type="Pfam" id="PF00958">
    <property type="entry name" value="GMP_synt_C"/>
    <property type="match status" value="1"/>
</dbReference>
<dbReference type="Pfam" id="PF02540">
    <property type="entry name" value="NAD_synthase"/>
    <property type="match status" value="1"/>
</dbReference>
<dbReference type="SUPFAM" id="SSF52402">
    <property type="entry name" value="Adenine nucleotide alpha hydrolases-like"/>
    <property type="match status" value="1"/>
</dbReference>
<dbReference type="SUPFAM" id="SSF54810">
    <property type="entry name" value="GMP synthetase C-terminal dimerisation domain"/>
    <property type="match status" value="1"/>
</dbReference>
<dbReference type="PROSITE" id="PS51553">
    <property type="entry name" value="GMPS_ATP_PPASE"/>
    <property type="match status" value="1"/>
</dbReference>
<comment type="function">
    <text evidence="1">Catalyzes the synthesis of GMP from XMP.</text>
</comment>
<comment type="catalytic activity">
    <reaction>
        <text>XMP + L-glutamine + ATP + H2O = GMP + L-glutamate + AMP + diphosphate + 2 H(+)</text>
        <dbReference type="Rhea" id="RHEA:11680"/>
        <dbReference type="ChEBI" id="CHEBI:15377"/>
        <dbReference type="ChEBI" id="CHEBI:15378"/>
        <dbReference type="ChEBI" id="CHEBI:29985"/>
        <dbReference type="ChEBI" id="CHEBI:30616"/>
        <dbReference type="ChEBI" id="CHEBI:33019"/>
        <dbReference type="ChEBI" id="CHEBI:57464"/>
        <dbReference type="ChEBI" id="CHEBI:58115"/>
        <dbReference type="ChEBI" id="CHEBI:58359"/>
        <dbReference type="ChEBI" id="CHEBI:456215"/>
        <dbReference type="EC" id="6.3.5.2"/>
    </reaction>
</comment>
<comment type="pathway">
    <text>Purine metabolism; GMP biosynthesis; GMP from XMP (L-Gln route): step 1/1.</text>
</comment>
<comment type="subunit">
    <text evidence="2">Heterodimer composed of a glutamine amidotransferase subunit (A) and a GMP-binding subunit (B).</text>
</comment>
<accession>Q96Y23</accession>
<accession>F9VPE2</accession>
<reference key="1">
    <citation type="journal article" date="2001" name="DNA Res.">
        <title>Complete genome sequence of an aerobic thermoacidophilic Crenarchaeon, Sulfolobus tokodaii strain7.</title>
        <authorList>
            <person name="Kawarabayasi Y."/>
            <person name="Hino Y."/>
            <person name="Horikawa H."/>
            <person name="Jin-no K."/>
            <person name="Takahashi M."/>
            <person name="Sekine M."/>
            <person name="Baba S."/>
            <person name="Ankai A."/>
            <person name="Kosugi H."/>
            <person name="Hosoyama A."/>
            <person name="Fukui S."/>
            <person name="Nagai Y."/>
            <person name="Nishijima K."/>
            <person name="Otsuka R."/>
            <person name="Nakazawa H."/>
            <person name="Takamiya M."/>
            <person name="Kato Y."/>
            <person name="Yoshizawa T."/>
            <person name="Tanaka T."/>
            <person name="Kudoh Y."/>
            <person name="Yamazaki J."/>
            <person name="Kushida N."/>
            <person name="Oguchi A."/>
            <person name="Aoki K."/>
            <person name="Masuda S."/>
            <person name="Yanagii M."/>
            <person name="Nishimura M."/>
            <person name="Yamagishi A."/>
            <person name="Oshima T."/>
            <person name="Kikuchi H."/>
        </authorList>
    </citation>
    <scope>NUCLEOTIDE SEQUENCE [LARGE SCALE GENOMIC DNA]</scope>
    <source>
        <strain>DSM 16993 / JCM 10545 / NBRC 100140 / 7</strain>
    </source>
</reference>